<name>FLGD_ECOLI</name>
<organism>
    <name type="scientific">Escherichia coli (strain K12)</name>
    <dbReference type="NCBI Taxonomy" id="83333"/>
    <lineage>
        <taxon>Bacteria</taxon>
        <taxon>Pseudomonadati</taxon>
        <taxon>Pseudomonadota</taxon>
        <taxon>Gammaproteobacteria</taxon>
        <taxon>Enterobacterales</taxon>
        <taxon>Enterobacteriaceae</taxon>
        <taxon>Escherichia</taxon>
    </lineage>
</organism>
<sequence>MSIAVTTTDPTNTGVSTTSSSSLTGSNAADLQSSFLTLLVAQLKNQDPTNPMENNELTSQLAQISTVSGIEKLNTTLGSISGQIDNSQSLQASNLIGHGVMIPGTTVLAGTGSEEGAVTTTTPFGVELQQAADKVTATITDKNGAVVRTIDIGELTAGVHSFTWDGTLTDGSTAPNGSYNVAISASNGGTQLVAQPLQFALVQGVIRGNSGNTLDLGTYGTTTLDEVRQII</sequence>
<accession>P75936</accession>
<gene>
    <name type="primary">flgD</name>
    <name type="synonym">fla FIV</name>
    <name type="synonym">flaV</name>
    <name type="ordered locus">b1075</name>
    <name type="ordered locus">JW1062</name>
</gene>
<dbReference type="EMBL" id="U00096">
    <property type="protein sequence ID" value="AAC74159.1"/>
    <property type="molecule type" value="Genomic_DNA"/>
</dbReference>
<dbReference type="EMBL" id="AP009048">
    <property type="protein sequence ID" value="BAA35883.1"/>
    <property type="molecule type" value="Genomic_DNA"/>
</dbReference>
<dbReference type="PIR" id="H64850">
    <property type="entry name" value="H64850"/>
</dbReference>
<dbReference type="RefSeq" id="NP_415593.1">
    <property type="nucleotide sequence ID" value="NC_000913.3"/>
</dbReference>
<dbReference type="RefSeq" id="WP_000020486.1">
    <property type="nucleotide sequence ID" value="NZ_SSUW01000034.1"/>
</dbReference>
<dbReference type="SMR" id="P75936"/>
<dbReference type="BioGRID" id="4263351">
    <property type="interactions" value="15"/>
</dbReference>
<dbReference type="DIP" id="DIP-9632N"/>
<dbReference type="FunCoup" id="P75936">
    <property type="interactions" value="164"/>
</dbReference>
<dbReference type="IntAct" id="P75936">
    <property type="interactions" value="3"/>
</dbReference>
<dbReference type="STRING" id="511145.b1075"/>
<dbReference type="PaxDb" id="511145-b1075"/>
<dbReference type="EnsemblBacteria" id="AAC74159">
    <property type="protein sequence ID" value="AAC74159"/>
    <property type="gene ID" value="b1075"/>
</dbReference>
<dbReference type="GeneID" id="93776332"/>
<dbReference type="GeneID" id="945813"/>
<dbReference type="KEGG" id="ecj:JW1062"/>
<dbReference type="KEGG" id="eco:b1075"/>
<dbReference type="KEGG" id="ecoc:C3026_06520"/>
<dbReference type="PATRIC" id="fig|1411691.4.peg.1193"/>
<dbReference type="EchoBASE" id="EB4016"/>
<dbReference type="eggNOG" id="COG1843">
    <property type="taxonomic scope" value="Bacteria"/>
</dbReference>
<dbReference type="HOGENOM" id="CLU_047535_0_0_6"/>
<dbReference type="InParanoid" id="P75936"/>
<dbReference type="OMA" id="STYAHVT"/>
<dbReference type="OrthoDB" id="9785233at2"/>
<dbReference type="PhylomeDB" id="P75936"/>
<dbReference type="BioCyc" id="EcoCyc:G360-MONOMER"/>
<dbReference type="PRO" id="PR:P75936"/>
<dbReference type="Proteomes" id="UP000000625">
    <property type="component" value="Chromosome"/>
</dbReference>
<dbReference type="GO" id="GO:0005829">
    <property type="term" value="C:cytosol"/>
    <property type="evidence" value="ECO:0000314"/>
    <property type="project" value="EcoCyc"/>
</dbReference>
<dbReference type="GO" id="GO:0044781">
    <property type="term" value="P:bacterial-type flagellum organization"/>
    <property type="evidence" value="ECO:0007669"/>
    <property type="project" value="UniProtKB-KW"/>
</dbReference>
<dbReference type="Gene3D" id="2.30.30.910">
    <property type="match status" value="1"/>
</dbReference>
<dbReference type="Gene3D" id="2.60.40.4070">
    <property type="match status" value="1"/>
</dbReference>
<dbReference type="InterPro" id="IPR005648">
    <property type="entry name" value="FlgD"/>
</dbReference>
<dbReference type="InterPro" id="IPR025965">
    <property type="entry name" value="FlgD/Vpr_Ig-like"/>
</dbReference>
<dbReference type="InterPro" id="IPR025963">
    <property type="entry name" value="FLgD_Tudor"/>
</dbReference>
<dbReference type="NCBIfam" id="NF005176">
    <property type="entry name" value="PRK06655.1-1"/>
    <property type="match status" value="1"/>
</dbReference>
<dbReference type="Pfam" id="PF03963">
    <property type="entry name" value="FlgD"/>
    <property type="match status" value="1"/>
</dbReference>
<dbReference type="Pfam" id="PF13860">
    <property type="entry name" value="FlgD_ig"/>
    <property type="match status" value="1"/>
</dbReference>
<dbReference type="Pfam" id="PF13861">
    <property type="entry name" value="FLgD_tudor"/>
    <property type="match status" value="1"/>
</dbReference>
<keyword id="KW-1005">Bacterial flagellum biogenesis</keyword>
<keyword id="KW-1185">Reference proteome</keyword>
<feature type="chain" id="PRO_0000180812" description="Basal-body rod modification protein FlgD">
    <location>
        <begin position="1"/>
        <end position="231"/>
    </location>
</feature>
<feature type="region of interest" description="Disordered" evidence="1">
    <location>
        <begin position="1"/>
        <end position="26"/>
    </location>
</feature>
<feature type="compositionally biased region" description="Polar residues" evidence="1">
    <location>
        <begin position="1"/>
        <end position="10"/>
    </location>
</feature>
<feature type="compositionally biased region" description="Low complexity" evidence="1">
    <location>
        <begin position="11"/>
        <end position="26"/>
    </location>
</feature>
<comment type="function">
    <text>Required for flagellar hook formation. May act as a scaffolding protein.</text>
</comment>
<comment type="similarity">
    <text evidence="2">Belongs to the FlgD family.</text>
</comment>
<reference key="1">
    <citation type="journal article" date="1996" name="DNA Res.">
        <title>A 718-kb DNA sequence of the Escherichia coli K-12 genome corresponding to the 12.7-28.0 min region on the linkage map.</title>
        <authorList>
            <person name="Oshima T."/>
            <person name="Aiba H."/>
            <person name="Baba T."/>
            <person name="Fujita K."/>
            <person name="Hayashi K."/>
            <person name="Honjo A."/>
            <person name="Ikemoto K."/>
            <person name="Inada T."/>
            <person name="Itoh T."/>
            <person name="Kajihara M."/>
            <person name="Kanai K."/>
            <person name="Kashimoto K."/>
            <person name="Kimura S."/>
            <person name="Kitagawa M."/>
            <person name="Makino K."/>
            <person name="Masuda S."/>
            <person name="Miki T."/>
            <person name="Mizobuchi K."/>
            <person name="Mori H."/>
            <person name="Motomura K."/>
            <person name="Nakamura Y."/>
            <person name="Nashimoto H."/>
            <person name="Nishio Y."/>
            <person name="Saito N."/>
            <person name="Sampei G."/>
            <person name="Seki Y."/>
            <person name="Tagami H."/>
            <person name="Takemoto K."/>
            <person name="Wada C."/>
            <person name="Yamamoto Y."/>
            <person name="Yano M."/>
            <person name="Horiuchi T."/>
        </authorList>
    </citation>
    <scope>NUCLEOTIDE SEQUENCE [LARGE SCALE GENOMIC DNA]</scope>
    <source>
        <strain>K12 / W3110 / ATCC 27325 / DSM 5911</strain>
    </source>
</reference>
<reference key="2">
    <citation type="journal article" date="1997" name="Science">
        <title>The complete genome sequence of Escherichia coli K-12.</title>
        <authorList>
            <person name="Blattner F.R."/>
            <person name="Plunkett G. III"/>
            <person name="Bloch C.A."/>
            <person name="Perna N.T."/>
            <person name="Burland V."/>
            <person name="Riley M."/>
            <person name="Collado-Vides J."/>
            <person name="Glasner J.D."/>
            <person name="Rode C.K."/>
            <person name="Mayhew G.F."/>
            <person name="Gregor J."/>
            <person name="Davis N.W."/>
            <person name="Kirkpatrick H.A."/>
            <person name="Goeden M.A."/>
            <person name="Rose D.J."/>
            <person name="Mau B."/>
            <person name="Shao Y."/>
        </authorList>
    </citation>
    <scope>NUCLEOTIDE SEQUENCE [LARGE SCALE GENOMIC DNA]</scope>
    <source>
        <strain>K12 / MG1655 / ATCC 47076</strain>
    </source>
</reference>
<reference key="3">
    <citation type="journal article" date="2006" name="Mol. Syst. Biol.">
        <title>Highly accurate genome sequences of Escherichia coli K-12 strains MG1655 and W3110.</title>
        <authorList>
            <person name="Hayashi K."/>
            <person name="Morooka N."/>
            <person name="Yamamoto Y."/>
            <person name="Fujita K."/>
            <person name="Isono K."/>
            <person name="Choi S."/>
            <person name="Ohtsubo E."/>
            <person name="Baba T."/>
            <person name="Wanner B.L."/>
            <person name="Mori H."/>
            <person name="Horiuchi T."/>
        </authorList>
    </citation>
    <scope>NUCLEOTIDE SEQUENCE [LARGE SCALE GENOMIC DNA]</scope>
    <source>
        <strain>K12 / W3110 / ATCC 27325 / DSM 5911</strain>
    </source>
</reference>
<evidence type="ECO:0000256" key="1">
    <source>
        <dbReference type="SAM" id="MobiDB-lite"/>
    </source>
</evidence>
<evidence type="ECO:0000305" key="2"/>
<protein>
    <recommendedName>
        <fullName>Basal-body rod modification protein FlgD</fullName>
    </recommendedName>
</protein>
<proteinExistence type="inferred from homology"/>